<gene>
    <name type="primary">PEX6</name>
    <name type="ordered locus">AGR394W</name>
</gene>
<evidence type="ECO:0000250" key="1">
    <source>
        <dbReference type="UniProtKB" id="P33760"/>
    </source>
</evidence>
<evidence type="ECO:0000255" key="2"/>
<evidence type="ECO:0000305" key="3"/>
<organism>
    <name type="scientific">Eremothecium gossypii (strain ATCC 10895 / CBS 109.51 / FGSC 9923 / NRRL Y-1056)</name>
    <name type="common">Yeast</name>
    <name type="synonym">Ashbya gossypii</name>
    <dbReference type="NCBI Taxonomy" id="284811"/>
    <lineage>
        <taxon>Eukaryota</taxon>
        <taxon>Fungi</taxon>
        <taxon>Dikarya</taxon>
        <taxon>Ascomycota</taxon>
        <taxon>Saccharomycotina</taxon>
        <taxon>Saccharomycetes</taxon>
        <taxon>Saccharomycetales</taxon>
        <taxon>Saccharomycetaceae</taxon>
        <taxon>Eremothecium</taxon>
    </lineage>
</organism>
<name>PEX6_EREGS</name>
<dbReference type="EC" id="3.6.4.-" evidence="1"/>
<dbReference type="EMBL" id="AE016820">
    <property type="protein sequence ID" value="AAS54884.1"/>
    <property type="molecule type" value="Genomic_DNA"/>
</dbReference>
<dbReference type="RefSeq" id="NP_987060.1">
    <property type="nucleotide sequence ID" value="NM_212122.1"/>
</dbReference>
<dbReference type="SMR" id="Q74Z13"/>
<dbReference type="FunCoup" id="Q74Z13">
    <property type="interactions" value="294"/>
</dbReference>
<dbReference type="STRING" id="284811.Q74Z13"/>
<dbReference type="EnsemblFungi" id="AAS54884">
    <property type="protein sequence ID" value="AAS54884"/>
    <property type="gene ID" value="AGOS_AGR394W"/>
</dbReference>
<dbReference type="GeneID" id="4623364"/>
<dbReference type="KEGG" id="ago:AGOS_AGR394W"/>
<dbReference type="eggNOG" id="KOG0736">
    <property type="taxonomic scope" value="Eukaryota"/>
</dbReference>
<dbReference type="HOGENOM" id="CLU_000688_0_4_1"/>
<dbReference type="InParanoid" id="Q74Z13"/>
<dbReference type="OMA" id="DSMLNAM"/>
<dbReference type="OrthoDB" id="5553750at2759"/>
<dbReference type="Proteomes" id="UP000000591">
    <property type="component" value="Chromosome VII"/>
</dbReference>
<dbReference type="GO" id="GO:1904949">
    <property type="term" value="C:ATPase complex"/>
    <property type="evidence" value="ECO:0007669"/>
    <property type="project" value="EnsemblFungi"/>
</dbReference>
<dbReference type="GO" id="GO:0005829">
    <property type="term" value="C:cytosol"/>
    <property type="evidence" value="ECO:0000318"/>
    <property type="project" value="GO_Central"/>
</dbReference>
<dbReference type="GO" id="GO:0005778">
    <property type="term" value="C:peroxisomal membrane"/>
    <property type="evidence" value="ECO:0000318"/>
    <property type="project" value="GO_Central"/>
</dbReference>
<dbReference type="GO" id="GO:1990351">
    <property type="term" value="C:transporter complex"/>
    <property type="evidence" value="ECO:0007669"/>
    <property type="project" value="EnsemblFungi"/>
</dbReference>
<dbReference type="GO" id="GO:0005524">
    <property type="term" value="F:ATP binding"/>
    <property type="evidence" value="ECO:0007669"/>
    <property type="project" value="UniProtKB-KW"/>
</dbReference>
<dbReference type="GO" id="GO:0016887">
    <property type="term" value="F:ATP hydrolysis activity"/>
    <property type="evidence" value="ECO:0000318"/>
    <property type="project" value="GO_Central"/>
</dbReference>
<dbReference type="GO" id="GO:0140318">
    <property type="term" value="F:protein transporter activity"/>
    <property type="evidence" value="ECO:0007669"/>
    <property type="project" value="EnsemblFungi"/>
</dbReference>
<dbReference type="GO" id="GO:0016558">
    <property type="term" value="P:protein import into peroxisome matrix"/>
    <property type="evidence" value="ECO:0000318"/>
    <property type="project" value="GO_Central"/>
</dbReference>
<dbReference type="GO" id="GO:0016562">
    <property type="term" value="P:protein import into peroxisome matrix, receptor recycling"/>
    <property type="evidence" value="ECO:0007669"/>
    <property type="project" value="EnsemblFungi"/>
</dbReference>
<dbReference type="GO" id="GO:0043335">
    <property type="term" value="P:protein unfolding"/>
    <property type="evidence" value="ECO:0000318"/>
    <property type="project" value="GO_Central"/>
</dbReference>
<dbReference type="CDD" id="cd19527">
    <property type="entry name" value="RecA-like_PEX6_r2"/>
    <property type="match status" value="1"/>
</dbReference>
<dbReference type="FunFam" id="3.40.50.300:FF:000109">
    <property type="entry name" value="Peroxisomal biogenesis factor 6"/>
    <property type="match status" value="1"/>
</dbReference>
<dbReference type="FunFam" id="3.40.50.300:FF:006001">
    <property type="entry name" value="Peroxisomal biogenesis factor 6"/>
    <property type="match status" value="1"/>
</dbReference>
<dbReference type="FunFam" id="1.10.8.60:FF:000039">
    <property type="entry name" value="peroxisome biogenesis factor 6"/>
    <property type="match status" value="1"/>
</dbReference>
<dbReference type="Gene3D" id="1.10.8.60">
    <property type="match status" value="2"/>
</dbReference>
<dbReference type="Gene3D" id="3.40.50.300">
    <property type="entry name" value="P-loop containing nucleotide triphosphate hydrolases"/>
    <property type="match status" value="2"/>
</dbReference>
<dbReference type="InterPro" id="IPR003593">
    <property type="entry name" value="AAA+_ATPase"/>
</dbReference>
<dbReference type="InterPro" id="IPR050168">
    <property type="entry name" value="AAA_ATPase_domain"/>
</dbReference>
<dbReference type="InterPro" id="IPR003959">
    <property type="entry name" value="ATPase_AAA_core"/>
</dbReference>
<dbReference type="InterPro" id="IPR003960">
    <property type="entry name" value="ATPase_AAA_CS"/>
</dbReference>
<dbReference type="InterPro" id="IPR027417">
    <property type="entry name" value="P-loop_NTPase"/>
</dbReference>
<dbReference type="InterPro" id="IPR056995">
    <property type="entry name" value="PEX6_4th_dom"/>
</dbReference>
<dbReference type="InterPro" id="IPR047533">
    <property type="entry name" value="RecA-like_PEX6_r2"/>
</dbReference>
<dbReference type="PANTHER" id="PTHR23077">
    <property type="entry name" value="AAA-FAMILY ATPASE"/>
    <property type="match status" value="1"/>
</dbReference>
<dbReference type="PANTHER" id="PTHR23077:SF9">
    <property type="entry name" value="PEROXISOMAL ATPASE PEX6"/>
    <property type="match status" value="1"/>
</dbReference>
<dbReference type="Pfam" id="PF00004">
    <property type="entry name" value="AAA"/>
    <property type="match status" value="2"/>
</dbReference>
<dbReference type="Pfam" id="PF23111">
    <property type="entry name" value="N1_PEX6"/>
    <property type="match status" value="1"/>
</dbReference>
<dbReference type="Pfam" id="PF23315">
    <property type="entry name" value="PEX6_4th"/>
    <property type="match status" value="1"/>
</dbReference>
<dbReference type="SMART" id="SM00382">
    <property type="entry name" value="AAA"/>
    <property type="match status" value="2"/>
</dbReference>
<dbReference type="SUPFAM" id="SSF52540">
    <property type="entry name" value="P-loop containing nucleoside triphosphate hydrolases"/>
    <property type="match status" value="2"/>
</dbReference>
<dbReference type="PROSITE" id="PS00674">
    <property type="entry name" value="AAA"/>
    <property type="match status" value="1"/>
</dbReference>
<comment type="function">
    <text evidence="1">Component of the PEX1-PEX6 AAA ATPase complex, a protein dislocase complex that mediates the ATP-dependent extraction of the PEX5 receptor from peroxisomal membranes, an essential step for PEX5 recycling. Specifically recognizes PEX5 monoubiquitinated at 'Cys-6', and pulls it out of the peroxisome lumen through the PEX2-PEX10-PEX12 retrotranslocation channel. Extraction by the PEX1-PEX6 AAA ATPase complex is accompanied by unfolding of the TPR repeats and release of bound cargo from PEX5.</text>
</comment>
<comment type="catalytic activity">
    <reaction evidence="1">
        <text>ATP + H2O = ADP + phosphate + H(+)</text>
        <dbReference type="Rhea" id="RHEA:13065"/>
        <dbReference type="ChEBI" id="CHEBI:15377"/>
        <dbReference type="ChEBI" id="CHEBI:15378"/>
        <dbReference type="ChEBI" id="CHEBI:30616"/>
        <dbReference type="ChEBI" id="CHEBI:43474"/>
        <dbReference type="ChEBI" id="CHEBI:456216"/>
    </reaction>
    <physiologicalReaction direction="left-to-right" evidence="1">
        <dbReference type="Rhea" id="RHEA:13066"/>
    </physiologicalReaction>
</comment>
<comment type="subunit">
    <text evidence="1">Interacts with PEX1; forming the PEX1-PEX6 AAA ATPase complex, which is composed of a heterohexamer formed by a trimer of PEX1-PEX6 dimers.</text>
</comment>
<comment type="subcellular location">
    <subcellularLocation>
        <location evidence="1">Cytoplasm</location>
        <location evidence="1">Cytosol</location>
    </subcellularLocation>
    <subcellularLocation>
        <location evidence="1">Peroxisome membrane</location>
        <topology evidence="1">Peripheral membrane protein</topology>
        <orientation evidence="1">Cytoplasmic side</orientation>
    </subcellularLocation>
</comment>
<comment type="similarity">
    <text evidence="3">Belongs to the AAA ATPase family.</text>
</comment>
<protein>
    <recommendedName>
        <fullName evidence="3">Peroxisomal ATPase PEX6</fullName>
        <ecNumber evidence="1">3.6.4.-</ecNumber>
    </recommendedName>
    <alternativeName>
        <fullName>Peroxin-6</fullName>
    </alternativeName>
    <alternativeName>
        <fullName>Peroxisomal biogenesis factor 6</fullName>
    </alternativeName>
</protein>
<feature type="chain" id="PRO_0000084610" description="Peroxisomal ATPase PEX6">
    <location>
        <begin position="1"/>
        <end position="1021"/>
    </location>
</feature>
<feature type="binding site" evidence="2">
    <location>
        <begin position="763"/>
        <end position="770"/>
    </location>
    <ligand>
        <name>ATP</name>
        <dbReference type="ChEBI" id="CHEBI:30616"/>
    </ligand>
</feature>
<keyword id="KW-0067">ATP-binding</keyword>
<keyword id="KW-0963">Cytoplasm</keyword>
<keyword id="KW-0378">Hydrolase</keyword>
<keyword id="KW-0472">Membrane</keyword>
<keyword id="KW-0547">Nucleotide-binding</keyword>
<keyword id="KW-0576">Peroxisome</keyword>
<keyword id="KW-0962">Peroxisome biogenesis</keyword>
<keyword id="KW-1185">Reference proteome</keyword>
<proteinExistence type="inferred from homology"/>
<reference key="1">
    <citation type="journal article" date="2004" name="Science">
        <title>The Ashbya gossypii genome as a tool for mapping the ancient Saccharomyces cerevisiae genome.</title>
        <authorList>
            <person name="Dietrich F.S."/>
            <person name="Voegeli S."/>
            <person name="Brachat S."/>
            <person name="Lerch A."/>
            <person name="Gates K."/>
            <person name="Steiner S."/>
            <person name="Mohr C."/>
            <person name="Poehlmann R."/>
            <person name="Luedi P."/>
            <person name="Choi S."/>
            <person name="Wing R.A."/>
            <person name="Flavier A."/>
            <person name="Gaffney T.D."/>
            <person name="Philippsen P."/>
        </authorList>
    </citation>
    <scope>NUCLEOTIDE SEQUENCE [LARGE SCALE GENOMIC DNA]</scope>
    <source>
        <strain>ATCC 10895 / CBS 109.51 / FGSC 9923 / NRRL Y-1056</strain>
    </source>
</reference>
<reference key="2">
    <citation type="journal article" date="2013" name="G3 (Bethesda)">
        <title>Genomes of Ashbya fungi isolated from insects reveal four mating-type loci, numerous translocations, lack of transposons, and distinct gene duplications.</title>
        <authorList>
            <person name="Dietrich F.S."/>
            <person name="Voegeli S."/>
            <person name="Kuo S."/>
            <person name="Philippsen P."/>
        </authorList>
    </citation>
    <scope>GENOME REANNOTATION</scope>
    <source>
        <strain>ATCC 10895 / CBS 109.51 / FGSC 9923 / NRRL Y-1056</strain>
    </source>
</reference>
<sequence length="1021" mass="113501">MVIANLVFSASGTSLASVSRELYCTLFGPAPDELKHEFYVSVQLPSYSRHAKTYVVQSTLNETLEGQVVQLPSKIEDVPLDTPLIDLCKVEAVRERPPVLESVTIEVHGSLYEELTKLSEEDQLRFLQIRGDLRDCGTVVRAGQKLFVPWCQILDCVPYYQGLIDLQRTRILLLKGTDAMESCHLRKGLEDLKLRPNEGPTKELRIMLRCLEQPIERALLVPAADTDDDDSLFVFASAAVLLRLGVTSGARVTLSDGATSRIAKVFVLLSPNHFDSDAIYATPRLVVNFAEADKVVVSKYEGEMAELPVASSVSISRVGSWENSQMVYQKIILNNLTNFITAKQRIFYKDDLVPVTFDSDFSAMFSDQLNEFSVDYHDDSLVWFKIDTVKLNDDIPCEGAFRIDSKVTKLVTCNVSSSPPPPLSKCDYVSYYGLEPCFGYDRRVFDYAKRFHDIITTSRKCFQHGMNVGTTVMLHSSSVSVGKTTLVRSTCRELGIHLIEIDLLQLDPHMNSSNSTVNIVALIRAKIENVLPHTAPSVVYLAHLEGVLEKEDQISDPASLKAAKSMGIELAKLFTDYTELYPGTVFVCSTDALDVVPEAIRSKTKFEIEVPVPTETQRVEIFSWYLSPDVLNFNASQQFAMDHDVTISRLALQSAGLTPIDIRSIVESAKVCCYQRSKEKQHMLWQGGYRYINSADLSAAINKARDEFSDSIGAPKIPNVFWEDIGGLEMVKGEILDTIDMPLKFPELFASGMKKRSGILFYGPPGTGKTLLAKAVATNFSLNFFSVKGPELLNMYIGESEANVRRVFQRARDAKPCVIFFDELDSVAPKRGNQGDSGGVMDRIVSQLLAELDGLSTGGDGLFVIGATNRPDLLDEALLRPGRFDKLLYLGISDTNEKQANILRALTRKFTLDPDVSLDDLAASCPFTYTGADFYALCSDAMLNAMTRIAGNVDEKVASYNRAHNKNYSVRQWFDVIATAEDTSITVCMQDFVKAQRELVPSVSEGELNHYLAIRDNFESS</sequence>
<accession>Q74Z13</accession>